<sequence>MSVVEIEDGVFESTATIDNGSFGTRTIRFEAGRLAQQAAGAVVAYLDDETMLLSATTASKSPKEHFDFFPLTIDVEERMYAAGRIPGSFFRREGRPSTDAILTCRLIDRPLRPSFVSGLRNEIQVVVTVLSLDPKDLYDVLAINAASASTQISGLPFSGPVGGVRVALIDGQWVAFPTVEQLERAVFDMVVAGRKVGDDHKDVAIMMVEAEATENVIELVAGGAGAPTETVVAEGLEAAKPFIAVLCDAQAALAGAAGKETAEYPLFPDYGDDVYYSVASVATEALSEALTIAGKNERNDRTDEIKVEVLNRLAEQYAGREKEIGAAYRSLTKKLVRQRILTDHFRIDGRGVTDIRALSAEVAVVPRAHGSALFERGETQIMGVTTLDMVKMAQQIDSLGPETSKRYMHHYNFPPYSTGETGRVGSPKRREIGHGALAERALVPVLPSVEEFPYAIRQVSEALGSNGSTSMGSVCASTLSLLNAGVPLKAPVAGIAMGLVSDDIEIDGKTERRFVTLTDILGAEDAFGDMDFKCAGTKDFVTALQLDTKLDGIPSQVLAGALAQAKDARITILEVMAEAIDTPDEMSPYAPRITTIKVPVDKIGEVIGPKGKMINSITEETGASISIEDDGTVFVGASNGEAAQAAIDKINAIANPQLPKVGERFLGTVVKTTDFGAFVSLLPGRDGLVHISKLGRGKRINKVEDVAKVGDKLRVEIADIDNRGKISLVLVAEESETAADAPADAPVDAATTSS</sequence>
<name>PNP_MYCVP</name>
<comment type="function">
    <text evidence="1">Involved in mRNA degradation. Catalyzes the phosphorolysis of single-stranded polyribonucleotides processively in the 3'- to 5'-direction.</text>
</comment>
<comment type="catalytic activity">
    <reaction evidence="1">
        <text>RNA(n+1) + phosphate = RNA(n) + a ribonucleoside 5'-diphosphate</text>
        <dbReference type="Rhea" id="RHEA:22096"/>
        <dbReference type="Rhea" id="RHEA-COMP:14527"/>
        <dbReference type="Rhea" id="RHEA-COMP:17342"/>
        <dbReference type="ChEBI" id="CHEBI:43474"/>
        <dbReference type="ChEBI" id="CHEBI:57930"/>
        <dbReference type="ChEBI" id="CHEBI:140395"/>
        <dbReference type="EC" id="2.7.7.8"/>
    </reaction>
</comment>
<comment type="cofactor">
    <cofactor evidence="1">
        <name>Mg(2+)</name>
        <dbReference type="ChEBI" id="CHEBI:18420"/>
    </cofactor>
</comment>
<comment type="subcellular location">
    <subcellularLocation>
        <location evidence="1">Cytoplasm</location>
    </subcellularLocation>
</comment>
<comment type="similarity">
    <text evidence="1">Belongs to the polyribonucleotide nucleotidyltransferase family.</text>
</comment>
<protein>
    <recommendedName>
        <fullName evidence="1">Polyribonucleotide nucleotidyltransferase</fullName>
        <ecNumber evidence="1">2.7.7.8</ecNumber>
    </recommendedName>
    <alternativeName>
        <fullName evidence="1">Polynucleotide phosphorylase</fullName>
        <shortName evidence="1">PNPase</shortName>
    </alternativeName>
</protein>
<evidence type="ECO:0000255" key="1">
    <source>
        <dbReference type="HAMAP-Rule" id="MF_01595"/>
    </source>
</evidence>
<gene>
    <name evidence="1" type="primary">pnp</name>
    <name type="ordered locus">Mvan_2350</name>
</gene>
<proteinExistence type="inferred from homology"/>
<feature type="chain" id="PRO_0000329727" description="Polyribonucleotide nucleotidyltransferase">
    <location>
        <begin position="1"/>
        <end position="754"/>
    </location>
</feature>
<feature type="domain" description="KH" evidence="1">
    <location>
        <begin position="591"/>
        <end position="650"/>
    </location>
</feature>
<feature type="domain" description="S1 motif" evidence="1">
    <location>
        <begin position="662"/>
        <end position="731"/>
    </location>
</feature>
<feature type="binding site" evidence="1">
    <location>
        <position position="525"/>
    </location>
    <ligand>
        <name>Mg(2+)</name>
        <dbReference type="ChEBI" id="CHEBI:18420"/>
    </ligand>
</feature>
<feature type="binding site" evidence="1">
    <location>
        <position position="531"/>
    </location>
    <ligand>
        <name>Mg(2+)</name>
        <dbReference type="ChEBI" id="CHEBI:18420"/>
    </ligand>
</feature>
<accession>A1T7L4</accession>
<dbReference type="EC" id="2.7.7.8" evidence="1"/>
<dbReference type="EMBL" id="CP000511">
    <property type="protein sequence ID" value="ABM13164.1"/>
    <property type="molecule type" value="Genomic_DNA"/>
</dbReference>
<dbReference type="RefSeq" id="WP_011779576.1">
    <property type="nucleotide sequence ID" value="NC_008726.1"/>
</dbReference>
<dbReference type="SMR" id="A1T7L4"/>
<dbReference type="STRING" id="350058.Mvan_2350"/>
<dbReference type="KEGG" id="mva:Mvan_2350"/>
<dbReference type="eggNOG" id="COG1185">
    <property type="taxonomic scope" value="Bacteria"/>
</dbReference>
<dbReference type="HOGENOM" id="CLU_004217_2_2_11"/>
<dbReference type="Proteomes" id="UP000009159">
    <property type="component" value="Chromosome"/>
</dbReference>
<dbReference type="GO" id="GO:0005829">
    <property type="term" value="C:cytosol"/>
    <property type="evidence" value="ECO:0007669"/>
    <property type="project" value="TreeGrafter"/>
</dbReference>
<dbReference type="GO" id="GO:0000175">
    <property type="term" value="F:3'-5'-RNA exonuclease activity"/>
    <property type="evidence" value="ECO:0007669"/>
    <property type="project" value="TreeGrafter"/>
</dbReference>
<dbReference type="GO" id="GO:0000287">
    <property type="term" value="F:magnesium ion binding"/>
    <property type="evidence" value="ECO:0007669"/>
    <property type="project" value="UniProtKB-UniRule"/>
</dbReference>
<dbReference type="GO" id="GO:0004654">
    <property type="term" value="F:polyribonucleotide nucleotidyltransferase activity"/>
    <property type="evidence" value="ECO:0007669"/>
    <property type="project" value="UniProtKB-UniRule"/>
</dbReference>
<dbReference type="GO" id="GO:0003723">
    <property type="term" value="F:RNA binding"/>
    <property type="evidence" value="ECO:0007669"/>
    <property type="project" value="UniProtKB-UniRule"/>
</dbReference>
<dbReference type="GO" id="GO:0006402">
    <property type="term" value="P:mRNA catabolic process"/>
    <property type="evidence" value="ECO:0007669"/>
    <property type="project" value="UniProtKB-UniRule"/>
</dbReference>
<dbReference type="GO" id="GO:0006396">
    <property type="term" value="P:RNA processing"/>
    <property type="evidence" value="ECO:0007669"/>
    <property type="project" value="InterPro"/>
</dbReference>
<dbReference type="CDD" id="cd02393">
    <property type="entry name" value="KH-I_PNPase"/>
    <property type="match status" value="1"/>
</dbReference>
<dbReference type="CDD" id="cd11364">
    <property type="entry name" value="RNase_PH_PNPase_2"/>
    <property type="match status" value="1"/>
</dbReference>
<dbReference type="CDD" id="cd04472">
    <property type="entry name" value="S1_PNPase"/>
    <property type="match status" value="1"/>
</dbReference>
<dbReference type="FunFam" id="2.40.50.140:FF:000069">
    <property type="entry name" value="Polyribonucleotide nucleotidyltransferase"/>
    <property type="match status" value="1"/>
</dbReference>
<dbReference type="FunFam" id="3.30.1370.10:FF:000001">
    <property type="entry name" value="Polyribonucleotide nucleotidyltransferase"/>
    <property type="match status" value="1"/>
</dbReference>
<dbReference type="FunFam" id="3.30.230.70:FF:000001">
    <property type="entry name" value="Polyribonucleotide nucleotidyltransferase"/>
    <property type="match status" value="1"/>
</dbReference>
<dbReference type="FunFam" id="3.30.230.70:FF:000002">
    <property type="entry name" value="Polyribonucleotide nucleotidyltransferase"/>
    <property type="match status" value="1"/>
</dbReference>
<dbReference type="Gene3D" id="3.30.230.70">
    <property type="entry name" value="GHMP Kinase, N-terminal domain"/>
    <property type="match status" value="2"/>
</dbReference>
<dbReference type="Gene3D" id="3.30.1370.10">
    <property type="entry name" value="K Homology domain, type 1"/>
    <property type="match status" value="1"/>
</dbReference>
<dbReference type="Gene3D" id="2.40.50.140">
    <property type="entry name" value="Nucleic acid-binding proteins"/>
    <property type="match status" value="1"/>
</dbReference>
<dbReference type="HAMAP" id="MF_01595">
    <property type="entry name" value="PNPase"/>
    <property type="match status" value="1"/>
</dbReference>
<dbReference type="InterPro" id="IPR001247">
    <property type="entry name" value="ExoRNase_PH_dom1"/>
</dbReference>
<dbReference type="InterPro" id="IPR015847">
    <property type="entry name" value="ExoRNase_PH_dom2"/>
</dbReference>
<dbReference type="InterPro" id="IPR036345">
    <property type="entry name" value="ExoRNase_PH_dom2_sf"/>
</dbReference>
<dbReference type="InterPro" id="IPR014069">
    <property type="entry name" value="GPSI/PNP"/>
</dbReference>
<dbReference type="InterPro" id="IPR004087">
    <property type="entry name" value="KH_dom"/>
</dbReference>
<dbReference type="InterPro" id="IPR004088">
    <property type="entry name" value="KH_dom_type_1"/>
</dbReference>
<dbReference type="InterPro" id="IPR036612">
    <property type="entry name" value="KH_dom_type_1_sf"/>
</dbReference>
<dbReference type="InterPro" id="IPR012340">
    <property type="entry name" value="NA-bd_OB-fold"/>
</dbReference>
<dbReference type="InterPro" id="IPR012162">
    <property type="entry name" value="PNPase"/>
</dbReference>
<dbReference type="InterPro" id="IPR027408">
    <property type="entry name" value="PNPase/RNase_PH_dom_sf"/>
</dbReference>
<dbReference type="InterPro" id="IPR015848">
    <property type="entry name" value="PNPase_PH_RNA-bd_bac/org-type"/>
</dbReference>
<dbReference type="InterPro" id="IPR036456">
    <property type="entry name" value="PNPase_PH_RNA-bd_sf"/>
</dbReference>
<dbReference type="InterPro" id="IPR020568">
    <property type="entry name" value="Ribosomal_Su5_D2-typ_SF"/>
</dbReference>
<dbReference type="InterPro" id="IPR003029">
    <property type="entry name" value="S1_domain"/>
</dbReference>
<dbReference type="NCBIfam" id="TIGR03591">
    <property type="entry name" value="polynuc_phos"/>
    <property type="match status" value="1"/>
</dbReference>
<dbReference type="NCBIfam" id="TIGR02696">
    <property type="entry name" value="pppGpp_PNP"/>
    <property type="match status" value="1"/>
</dbReference>
<dbReference type="NCBIfam" id="NF008805">
    <property type="entry name" value="PRK11824.1"/>
    <property type="match status" value="1"/>
</dbReference>
<dbReference type="PANTHER" id="PTHR11252">
    <property type="entry name" value="POLYRIBONUCLEOTIDE NUCLEOTIDYLTRANSFERASE"/>
    <property type="match status" value="1"/>
</dbReference>
<dbReference type="PANTHER" id="PTHR11252:SF0">
    <property type="entry name" value="POLYRIBONUCLEOTIDE NUCLEOTIDYLTRANSFERASE 1, MITOCHONDRIAL"/>
    <property type="match status" value="1"/>
</dbReference>
<dbReference type="Pfam" id="PF00013">
    <property type="entry name" value="KH_1"/>
    <property type="match status" value="1"/>
</dbReference>
<dbReference type="Pfam" id="PF03726">
    <property type="entry name" value="PNPase"/>
    <property type="match status" value="1"/>
</dbReference>
<dbReference type="Pfam" id="PF01138">
    <property type="entry name" value="RNase_PH"/>
    <property type="match status" value="2"/>
</dbReference>
<dbReference type="Pfam" id="PF03725">
    <property type="entry name" value="RNase_PH_C"/>
    <property type="match status" value="1"/>
</dbReference>
<dbReference type="Pfam" id="PF00575">
    <property type="entry name" value="S1"/>
    <property type="match status" value="1"/>
</dbReference>
<dbReference type="PIRSF" id="PIRSF005499">
    <property type="entry name" value="PNPase"/>
    <property type="match status" value="1"/>
</dbReference>
<dbReference type="SMART" id="SM00322">
    <property type="entry name" value="KH"/>
    <property type="match status" value="1"/>
</dbReference>
<dbReference type="SMART" id="SM00316">
    <property type="entry name" value="S1"/>
    <property type="match status" value="1"/>
</dbReference>
<dbReference type="SUPFAM" id="SSF54791">
    <property type="entry name" value="Eukaryotic type KH-domain (KH-domain type I)"/>
    <property type="match status" value="1"/>
</dbReference>
<dbReference type="SUPFAM" id="SSF50249">
    <property type="entry name" value="Nucleic acid-binding proteins"/>
    <property type="match status" value="1"/>
</dbReference>
<dbReference type="SUPFAM" id="SSF46915">
    <property type="entry name" value="Polynucleotide phosphorylase/guanosine pentaphosphate synthase (PNPase/GPSI), domain 3"/>
    <property type="match status" value="1"/>
</dbReference>
<dbReference type="SUPFAM" id="SSF55666">
    <property type="entry name" value="Ribonuclease PH domain 2-like"/>
    <property type="match status" value="2"/>
</dbReference>
<dbReference type="SUPFAM" id="SSF54211">
    <property type="entry name" value="Ribosomal protein S5 domain 2-like"/>
    <property type="match status" value="2"/>
</dbReference>
<dbReference type="PROSITE" id="PS50084">
    <property type="entry name" value="KH_TYPE_1"/>
    <property type="match status" value="1"/>
</dbReference>
<dbReference type="PROSITE" id="PS50126">
    <property type="entry name" value="S1"/>
    <property type="match status" value="1"/>
</dbReference>
<keyword id="KW-0963">Cytoplasm</keyword>
<keyword id="KW-0460">Magnesium</keyword>
<keyword id="KW-0479">Metal-binding</keyword>
<keyword id="KW-0548">Nucleotidyltransferase</keyword>
<keyword id="KW-0694">RNA-binding</keyword>
<keyword id="KW-0808">Transferase</keyword>
<reference key="1">
    <citation type="submission" date="2006-12" db="EMBL/GenBank/DDBJ databases">
        <title>Complete sequence of Mycobacterium vanbaalenii PYR-1.</title>
        <authorList>
            <consortium name="US DOE Joint Genome Institute"/>
            <person name="Copeland A."/>
            <person name="Lucas S."/>
            <person name="Lapidus A."/>
            <person name="Barry K."/>
            <person name="Detter J.C."/>
            <person name="Glavina del Rio T."/>
            <person name="Hammon N."/>
            <person name="Israni S."/>
            <person name="Dalin E."/>
            <person name="Tice H."/>
            <person name="Pitluck S."/>
            <person name="Singan V."/>
            <person name="Schmutz J."/>
            <person name="Larimer F."/>
            <person name="Land M."/>
            <person name="Hauser L."/>
            <person name="Kyrpides N."/>
            <person name="Anderson I.J."/>
            <person name="Miller C."/>
            <person name="Richardson P."/>
        </authorList>
    </citation>
    <scope>NUCLEOTIDE SEQUENCE [LARGE SCALE GENOMIC DNA]</scope>
    <source>
        <strain>DSM 7251 / JCM 13017 / BCRC 16820 / KCTC 9966 / NRRL B-24157 / PYR-1</strain>
    </source>
</reference>
<organism>
    <name type="scientific">Mycolicibacterium vanbaalenii (strain DSM 7251 / JCM 13017 / BCRC 16820 / KCTC 9966 / NRRL B-24157 / PYR-1)</name>
    <name type="common">Mycobacterium vanbaalenii</name>
    <dbReference type="NCBI Taxonomy" id="350058"/>
    <lineage>
        <taxon>Bacteria</taxon>
        <taxon>Bacillati</taxon>
        <taxon>Actinomycetota</taxon>
        <taxon>Actinomycetes</taxon>
        <taxon>Mycobacteriales</taxon>
        <taxon>Mycobacteriaceae</taxon>
        <taxon>Mycolicibacterium</taxon>
    </lineage>
</organism>